<dbReference type="EMBL" id="AE017224">
    <property type="protein sequence ID" value="AAX76186.1"/>
    <property type="molecule type" value="Genomic_DNA"/>
</dbReference>
<dbReference type="RefSeq" id="WP_002966198.1">
    <property type="nucleotide sequence ID" value="NC_006933.1"/>
</dbReference>
<dbReference type="SMR" id="Q577J8"/>
<dbReference type="EnsemblBacteria" id="AAX76186">
    <property type="protein sequence ID" value="AAX76186"/>
    <property type="gene ID" value="BruAb2_0792"/>
</dbReference>
<dbReference type="KEGG" id="bmb:BruAb2_0792"/>
<dbReference type="HOGENOM" id="CLU_017028_7_3_5"/>
<dbReference type="Proteomes" id="UP000000540">
    <property type="component" value="Chromosome II"/>
</dbReference>
<dbReference type="GO" id="GO:0043190">
    <property type="term" value="C:ATP-binding cassette (ABC) transporter complex"/>
    <property type="evidence" value="ECO:0007669"/>
    <property type="project" value="InterPro"/>
</dbReference>
<dbReference type="GO" id="GO:0030288">
    <property type="term" value="C:outer membrane-bounded periplasmic space"/>
    <property type="evidence" value="ECO:0007669"/>
    <property type="project" value="UniProtKB-ARBA"/>
</dbReference>
<dbReference type="GO" id="GO:1904680">
    <property type="term" value="F:peptide transmembrane transporter activity"/>
    <property type="evidence" value="ECO:0007669"/>
    <property type="project" value="TreeGrafter"/>
</dbReference>
<dbReference type="GO" id="GO:0015833">
    <property type="term" value="P:peptide transport"/>
    <property type="evidence" value="ECO:0007669"/>
    <property type="project" value="UniProtKB-KW"/>
</dbReference>
<dbReference type="GO" id="GO:0015031">
    <property type="term" value="P:protein transport"/>
    <property type="evidence" value="ECO:0007669"/>
    <property type="project" value="UniProtKB-KW"/>
</dbReference>
<dbReference type="CDD" id="cd00995">
    <property type="entry name" value="PBP2_NikA_DppA_OppA_like"/>
    <property type="match status" value="1"/>
</dbReference>
<dbReference type="Gene3D" id="3.90.76.10">
    <property type="entry name" value="Dipeptide-binding Protein, Domain 1"/>
    <property type="match status" value="1"/>
</dbReference>
<dbReference type="Gene3D" id="3.10.105.10">
    <property type="entry name" value="Dipeptide-binding Protein, Domain 3"/>
    <property type="match status" value="1"/>
</dbReference>
<dbReference type="Gene3D" id="3.40.190.10">
    <property type="entry name" value="Periplasmic binding protein-like II"/>
    <property type="match status" value="1"/>
</dbReference>
<dbReference type="InterPro" id="IPR030678">
    <property type="entry name" value="Peptide/Ni-bd"/>
</dbReference>
<dbReference type="InterPro" id="IPR039424">
    <property type="entry name" value="SBP_5"/>
</dbReference>
<dbReference type="InterPro" id="IPR000914">
    <property type="entry name" value="SBP_5_dom"/>
</dbReference>
<dbReference type="PANTHER" id="PTHR30290">
    <property type="entry name" value="PERIPLASMIC BINDING COMPONENT OF ABC TRANSPORTER"/>
    <property type="match status" value="1"/>
</dbReference>
<dbReference type="Pfam" id="PF00496">
    <property type="entry name" value="SBP_bac_5"/>
    <property type="match status" value="1"/>
</dbReference>
<dbReference type="PIRSF" id="PIRSF002741">
    <property type="entry name" value="MppA"/>
    <property type="match status" value="1"/>
</dbReference>
<dbReference type="SUPFAM" id="SSF53850">
    <property type="entry name" value="Periplasmic binding protein-like II"/>
    <property type="match status" value="1"/>
</dbReference>
<evidence type="ECO:0000250" key="1"/>
<evidence type="ECO:0000255" key="2"/>
<evidence type="ECO:0000305" key="3"/>
<protein>
    <recommendedName>
        <fullName>Putative ABC transporter peptide-binding protein BruAb2_0792</fullName>
    </recommendedName>
</protein>
<comment type="function">
    <text evidence="1">Probably part of an ABC transporter complex that could be involved in peptide import.</text>
</comment>
<comment type="subunit">
    <text evidence="3">The complex is composed of two ATP-binding proteins (BruAb2_0796 and BruAb2_0797), two transmembrane proteins (BruAb2_0794) and a solute-binding protein (BruAb2_0792).</text>
</comment>
<comment type="subcellular location">
    <subcellularLocation>
        <location evidence="3">Periplasm</location>
    </subcellularLocation>
</comment>
<comment type="similarity">
    <text evidence="3">Belongs to the bacterial solute-binding protein 5 family.</text>
</comment>
<keyword id="KW-0571">Peptide transport</keyword>
<keyword id="KW-0574">Periplasm</keyword>
<keyword id="KW-0653">Protein transport</keyword>
<keyword id="KW-0732">Signal</keyword>
<keyword id="KW-0813">Transport</keyword>
<feature type="signal peptide" evidence="2">
    <location>
        <begin position="1"/>
        <end position="23"/>
    </location>
</feature>
<feature type="chain" id="PRO_0000328703" description="Putative ABC transporter peptide-binding protein BruAb2_0792">
    <location>
        <begin position="24"/>
        <end position="527"/>
    </location>
</feature>
<gene>
    <name type="ordered locus">BruAb2_0792</name>
</gene>
<name>Y3092_BRUAB</name>
<accession>Q577J8</accession>
<proteinExistence type="inferred from homology"/>
<sequence>MRLRNFYSALALSAAVFAGPLYAAAPAMAAGTISGGFDVGPGGFQGNFNPLAATGGFTWLVTYFEPLVIYDDKLENIVGDLAKSFEISPDQLTYTFKLAHAKWHDGEPFTSKDAKFTFDLARNGKTGSVFAARLASIASVETPDEKTVVIKLKEPSPSMLDTLTKVMMLPEHALASIPPEQLAKNAWWSSTPIGTGPFKFNKYVADQYVELTANPDYRGGRPQVDKLINRYFADPAAAIAALRSGEIQFTYVDSNDVSTFSSDSAFRVIEGDSFVVNYVGFNQEVPLWKDLKVRQAFMHAINRDAIIQSLYGGAAKPANCVYVADRLVPKAIDAYAYDPQKARQLLDEAGWDKINGSKPITILTYYNSPLVANVLAAMQAMLAQVGINIVPRTVDTPTYNSIVYKQGGTADEFPLIFAGLQNGPDPSSINIGLNEKQIPPAGSNIMRIRMPAVTKALDAALAETNPAKRDARYQDVCKATNANLPWGTMWVANRYGVASSKLENFIWTPAPAGGPYQAHPEKWAILE</sequence>
<organism>
    <name type="scientific">Brucella abortus biovar 1 (strain 9-941)</name>
    <dbReference type="NCBI Taxonomy" id="262698"/>
    <lineage>
        <taxon>Bacteria</taxon>
        <taxon>Pseudomonadati</taxon>
        <taxon>Pseudomonadota</taxon>
        <taxon>Alphaproteobacteria</taxon>
        <taxon>Hyphomicrobiales</taxon>
        <taxon>Brucellaceae</taxon>
        <taxon>Brucella/Ochrobactrum group</taxon>
        <taxon>Brucella</taxon>
    </lineage>
</organism>
<reference key="1">
    <citation type="journal article" date="2005" name="J. Bacteriol.">
        <title>Completion of the genome sequence of Brucella abortus and comparison to the highly similar genomes of Brucella melitensis and Brucella suis.</title>
        <authorList>
            <person name="Halling S.M."/>
            <person name="Peterson-Burch B.D."/>
            <person name="Bricker B.J."/>
            <person name="Zuerner R.L."/>
            <person name="Qing Z."/>
            <person name="Li L.-L."/>
            <person name="Kapur V."/>
            <person name="Alt D.P."/>
            <person name="Olsen S.C."/>
        </authorList>
    </citation>
    <scope>NUCLEOTIDE SEQUENCE [LARGE SCALE GENOMIC DNA]</scope>
    <source>
        <strain>9-941</strain>
    </source>
</reference>